<protein>
    <recommendedName>
        <fullName evidence="1">Small ribosomal subunit protein uS8</fullName>
    </recommendedName>
    <alternativeName>
        <fullName evidence="2">30S ribosomal protein S8</fullName>
    </alternativeName>
</protein>
<keyword id="KW-0687">Ribonucleoprotein</keyword>
<keyword id="KW-0689">Ribosomal protein</keyword>
<keyword id="KW-0694">RNA-binding</keyword>
<keyword id="KW-0699">rRNA-binding</keyword>
<sequence>MSMTDPIADMLVRIKNAASVGKPNVRFPFSKVKLAIALVLKHEGYIFDAKVIQGDNSKSDIEVVLKYFEGRPVIRILKRVSRSGLRKYCGKAELPKVLGGLGVSIISTSKGIMTDSKARESGVGGEVLCFVA</sequence>
<accession>B0U5L3</accession>
<proteinExistence type="inferred from homology"/>
<dbReference type="EMBL" id="CP000941">
    <property type="protein sequence ID" value="ACA11517.1"/>
    <property type="molecule type" value="Genomic_DNA"/>
</dbReference>
<dbReference type="RefSeq" id="WP_004086536.1">
    <property type="nucleotide sequence ID" value="NC_010513.1"/>
</dbReference>
<dbReference type="SMR" id="B0U5L3"/>
<dbReference type="KEGG" id="xfm:Xfasm12_0508"/>
<dbReference type="HOGENOM" id="CLU_098428_0_0_6"/>
<dbReference type="GO" id="GO:1990904">
    <property type="term" value="C:ribonucleoprotein complex"/>
    <property type="evidence" value="ECO:0007669"/>
    <property type="project" value="UniProtKB-KW"/>
</dbReference>
<dbReference type="GO" id="GO:0005840">
    <property type="term" value="C:ribosome"/>
    <property type="evidence" value="ECO:0007669"/>
    <property type="project" value="UniProtKB-KW"/>
</dbReference>
<dbReference type="GO" id="GO:0019843">
    <property type="term" value="F:rRNA binding"/>
    <property type="evidence" value="ECO:0007669"/>
    <property type="project" value="UniProtKB-UniRule"/>
</dbReference>
<dbReference type="GO" id="GO:0003735">
    <property type="term" value="F:structural constituent of ribosome"/>
    <property type="evidence" value="ECO:0007669"/>
    <property type="project" value="InterPro"/>
</dbReference>
<dbReference type="GO" id="GO:0006412">
    <property type="term" value="P:translation"/>
    <property type="evidence" value="ECO:0007669"/>
    <property type="project" value="UniProtKB-UniRule"/>
</dbReference>
<dbReference type="FunFam" id="3.30.1490.10:FF:000001">
    <property type="entry name" value="30S ribosomal protein S8"/>
    <property type="match status" value="1"/>
</dbReference>
<dbReference type="Gene3D" id="3.30.1370.30">
    <property type="match status" value="1"/>
</dbReference>
<dbReference type="Gene3D" id="3.30.1490.10">
    <property type="match status" value="1"/>
</dbReference>
<dbReference type="HAMAP" id="MF_01302_B">
    <property type="entry name" value="Ribosomal_uS8_B"/>
    <property type="match status" value="1"/>
</dbReference>
<dbReference type="InterPro" id="IPR000630">
    <property type="entry name" value="Ribosomal_uS8"/>
</dbReference>
<dbReference type="InterPro" id="IPR047863">
    <property type="entry name" value="Ribosomal_uS8_CS"/>
</dbReference>
<dbReference type="InterPro" id="IPR035987">
    <property type="entry name" value="Ribosomal_uS8_sf"/>
</dbReference>
<dbReference type="NCBIfam" id="NF001109">
    <property type="entry name" value="PRK00136.1"/>
    <property type="match status" value="1"/>
</dbReference>
<dbReference type="PANTHER" id="PTHR11758">
    <property type="entry name" value="40S RIBOSOMAL PROTEIN S15A"/>
    <property type="match status" value="1"/>
</dbReference>
<dbReference type="Pfam" id="PF00410">
    <property type="entry name" value="Ribosomal_S8"/>
    <property type="match status" value="1"/>
</dbReference>
<dbReference type="SUPFAM" id="SSF56047">
    <property type="entry name" value="Ribosomal protein S8"/>
    <property type="match status" value="1"/>
</dbReference>
<dbReference type="PROSITE" id="PS00053">
    <property type="entry name" value="RIBOSOMAL_S8"/>
    <property type="match status" value="1"/>
</dbReference>
<organism>
    <name type="scientific">Xylella fastidiosa (strain M12)</name>
    <dbReference type="NCBI Taxonomy" id="405440"/>
    <lineage>
        <taxon>Bacteria</taxon>
        <taxon>Pseudomonadati</taxon>
        <taxon>Pseudomonadota</taxon>
        <taxon>Gammaproteobacteria</taxon>
        <taxon>Lysobacterales</taxon>
        <taxon>Lysobacteraceae</taxon>
        <taxon>Xylella</taxon>
    </lineage>
</organism>
<gene>
    <name evidence="1" type="primary">rpsH</name>
    <name type="ordered locus">Xfasm12_0508</name>
</gene>
<name>RS8_XYLFM</name>
<feature type="chain" id="PRO_1000140640" description="Small ribosomal subunit protein uS8">
    <location>
        <begin position="1"/>
        <end position="132"/>
    </location>
</feature>
<reference key="1">
    <citation type="journal article" date="2010" name="J. Bacteriol.">
        <title>Whole genome sequences of two Xylella fastidiosa strains (M12 and M23) causing almond leaf scorch disease in California.</title>
        <authorList>
            <person name="Chen J."/>
            <person name="Xie G."/>
            <person name="Han S."/>
            <person name="Chertkov O."/>
            <person name="Sims D."/>
            <person name="Civerolo E.L."/>
        </authorList>
    </citation>
    <scope>NUCLEOTIDE SEQUENCE [LARGE SCALE GENOMIC DNA]</scope>
    <source>
        <strain>M12</strain>
    </source>
</reference>
<comment type="function">
    <text evidence="1">One of the primary rRNA binding proteins, it binds directly to 16S rRNA central domain where it helps coordinate assembly of the platform of the 30S subunit.</text>
</comment>
<comment type="subunit">
    <text evidence="1">Part of the 30S ribosomal subunit. Contacts proteins S5 and S12.</text>
</comment>
<comment type="similarity">
    <text evidence="1">Belongs to the universal ribosomal protein uS8 family.</text>
</comment>
<evidence type="ECO:0000255" key="1">
    <source>
        <dbReference type="HAMAP-Rule" id="MF_01302"/>
    </source>
</evidence>
<evidence type="ECO:0000305" key="2"/>